<organism>
    <name type="scientific">Leptothrix cholodnii (strain ATCC 51168 / LMG 8142 / SP-6)</name>
    <name type="common">Leptothrix discophora (strain SP-6)</name>
    <dbReference type="NCBI Taxonomy" id="395495"/>
    <lineage>
        <taxon>Bacteria</taxon>
        <taxon>Pseudomonadati</taxon>
        <taxon>Pseudomonadota</taxon>
        <taxon>Betaproteobacteria</taxon>
        <taxon>Burkholderiales</taxon>
        <taxon>Sphaerotilaceae</taxon>
        <taxon>Leptothrix</taxon>
    </lineage>
</organism>
<sequence>MSTPGRSDQDAGAGTPPVDPAVSFTVLVPARLASTRLPRKALADLGGLPMVVRVAQRCALSGASAVVVATDSEEIRAACAAHGVRALMTRADHPTGSDRLAEACVQLGLDGRDIVVNVQGDEPLIEPGLIDACAGLLAQRSDCVMSTAAHALDDVEEYGNPNVVKVVTDAVGRALYFSRAPLPWWRDGYASGVLALPDPAPLRHIGIYGYSAGFLRRFPSLPESPLERIESLEQLRVLWHGERIAVHLSAVRPGPGIDTPEDLERVRRHFG</sequence>
<feature type="chain" id="PRO_0000370089" description="3-deoxy-manno-octulosonate cytidylyltransferase">
    <location>
        <begin position="1"/>
        <end position="271"/>
    </location>
</feature>
<gene>
    <name evidence="1" type="primary">kdsB</name>
    <name type="ordered locus">Lcho_2557</name>
</gene>
<reference key="1">
    <citation type="submission" date="2008-03" db="EMBL/GenBank/DDBJ databases">
        <title>Complete sequence of Leptothrix cholodnii SP-6.</title>
        <authorList>
            <consortium name="US DOE Joint Genome Institute"/>
            <person name="Copeland A."/>
            <person name="Lucas S."/>
            <person name="Lapidus A."/>
            <person name="Glavina del Rio T."/>
            <person name="Dalin E."/>
            <person name="Tice H."/>
            <person name="Bruce D."/>
            <person name="Goodwin L."/>
            <person name="Pitluck S."/>
            <person name="Chertkov O."/>
            <person name="Brettin T."/>
            <person name="Detter J.C."/>
            <person name="Han C."/>
            <person name="Kuske C.R."/>
            <person name="Schmutz J."/>
            <person name="Larimer F."/>
            <person name="Land M."/>
            <person name="Hauser L."/>
            <person name="Kyrpides N."/>
            <person name="Lykidis A."/>
            <person name="Emerson D."/>
            <person name="Richardson P."/>
        </authorList>
    </citation>
    <scope>NUCLEOTIDE SEQUENCE [LARGE SCALE GENOMIC DNA]</scope>
    <source>
        <strain>ATCC 51168 / LMG 8142 / SP-6</strain>
    </source>
</reference>
<keyword id="KW-0963">Cytoplasm</keyword>
<keyword id="KW-0448">Lipopolysaccharide biosynthesis</keyword>
<keyword id="KW-0548">Nucleotidyltransferase</keyword>
<keyword id="KW-1185">Reference proteome</keyword>
<keyword id="KW-0808">Transferase</keyword>
<name>KDSB_LEPCP</name>
<dbReference type="EC" id="2.7.7.38" evidence="1"/>
<dbReference type="EMBL" id="CP001013">
    <property type="protein sequence ID" value="ACB34822.1"/>
    <property type="molecule type" value="Genomic_DNA"/>
</dbReference>
<dbReference type="SMR" id="B1Y6I6"/>
<dbReference type="STRING" id="395495.Lcho_2557"/>
<dbReference type="KEGG" id="lch:Lcho_2557"/>
<dbReference type="eggNOG" id="COG1212">
    <property type="taxonomic scope" value="Bacteria"/>
</dbReference>
<dbReference type="HOGENOM" id="CLU_065038_1_0_4"/>
<dbReference type="UniPathway" id="UPA00030"/>
<dbReference type="UniPathway" id="UPA00358">
    <property type="reaction ID" value="UER00476"/>
</dbReference>
<dbReference type="Proteomes" id="UP000001693">
    <property type="component" value="Chromosome"/>
</dbReference>
<dbReference type="GO" id="GO:0005829">
    <property type="term" value="C:cytosol"/>
    <property type="evidence" value="ECO:0007669"/>
    <property type="project" value="TreeGrafter"/>
</dbReference>
<dbReference type="GO" id="GO:0008690">
    <property type="term" value="F:3-deoxy-manno-octulosonate cytidylyltransferase activity"/>
    <property type="evidence" value="ECO:0007669"/>
    <property type="project" value="UniProtKB-UniRule"/>
</dbReference>
<dbReference type="GO" id="GO:0033468">
    <property type="term" value="P:CMP-keto-3-deoxy-D-manno-octulosonic acid biosynthetic process"/>
    <property type="evidence" value="ECO:0007669"/>
    <property type="project" value="UniProtKB-UniRule"/>
</dbReference>
<dbReference type="GO" id="GO:0009103">
    <property type="term" value="P:lipopolysaccharide biosynthetic process"/>
    <property type="evidence" value="ECO:0007669"/>
    <property type="project" value="UniProtKB-UniRule"/>
</dbReference>
<dbReference type="CDD" id="cd02517">
    <property type="entry name" value="CMP-KDO-Synthetase"/>
    <property type="match status" value="1"/>
</dbReference>
<dbReference type="FunFam" id="3.90.550.10:FF:000011">
    <property type="entry name" value="3-deoxy-manno-octulosonate cytidylyltransferase"/>
    <property type="match status" value="1"/>
</dbReference>
<dbReference type="Gene3D" id="3.90.550.10">
    <property type="entry name" value="Spore Coat Polysaccharide Biosynthesis Protein SpsA, Chain A"/>
    <property type="match status" value="1"/>
</dbReference>
<dbReference type="HAMAP" id="MF_00057">
    <property type="entry name" value="KdsB"/>
    <property type="match status" value="1"/>
</dbReference>
<dbReference type="InterPro" id="IPR003329">
    <property type="entry name" value="Cytidylyl_trans"/>
</dbReference>
<dbReference type="InterPro" id="IPR004528">
    <property type="entry name" value="KdsB"/>
</dbReference>
<dbReference type="InterPro" id="IPR029044">
    <property type="entry name" value="Nucleotide-diphossugar_trans"/>
</dbReference>
<dbReference type="NCBIfam" id="TIGR00466">
    <property type="entry name" value="kdsB"/>
    <property type="match status" value="1"/>
</dbReference>
<dbReference type="NCBIfam" id="NF003952">
    <property type="entry name" value="PRK05450.1-5"/>
    <property type="match status" value="1"/>
</dbReference>
<dbReference type="NCBIfam" id="NF009905">
    <property type="entry name" value="PRK13368.1"/>
    <property type="match status" value="1"/>
</dbReference>
<dbReference type="PANTHER" id="PTHR42866">
    <property type="entry name" value="3-DEOXY-MANNO-OCTULOSONATE CYTIDYLYLTRANSFERASE"/>
    <property type="match status" value="1"/>
</dbReference>
<dbReference type="PANTHER" id="PTHR42866:SF2">
    <property type="entry name" value="3-DEOXY-MANNO-OCTULOSONATE CYTIDYLYLTRANSFERASE, MITOCHONDRIAL"/>
    <property type="match status" value="1"/>
</dbReference>
<dbReference type="Pfam" id="PF02348">
    <property type="entry name" value="CTP_transf_3"/>
    <property type="match status" value="1"/>
</dbReference>
<dbReference type="SUPFAM" id="SSF53448">
    <property type="entry name" value="Nucleotide-diphospho-sugar transferases"/>
    <property type="match status" value="1"/>
</dbReference>
<evidence type="ECO:0000255" key="1">
    <source>
        <dbReference type="HAMAP-Rule" id="MF_00057"/>
    </source>
</evidence>
<protein>
    <recommendedName>
        <fullName evidence="1">3-deoxy-manno-octulosonate cytidylyltransferase</fullName>
        <ecNumber evidence="1">2.7.7.38</ecNumber>
    </recommendedName>
    <alternativeName>
        <fullName evidence="1">CMP-2-keto-3-deoxyoctulosonic acid synthase</fullName>
        <shortName evidence="1">CKS</shortName>
        <shortName evidence="1">CMP-KDO synthase</shortName>
    </alternativeName>
</protein>
<accession>B1Y6I6</accession>
<comment type="function">
    <text evidence="1">Activates KDO (a required 8-carbon sugar) for incorporation into bacterial lipopolysaccharide in Gram-negative bacteria.</text>
</comment>
<comment type="catalytic activity">
    <reaction evidence="1">
        <text>3-deoxy-alpha-D-manno-oct-2-ulosonate + CTP = CMP-3-deoxy-beta-D-manno-octulosonate + diphosphate</text>
        <dbReference type="Rhea" id="RHEA:23448"/>
        <dbReference type="ChEBI" id="CHEBI:33019"/>
        <dbReference type="ChEBI" id="CHEBI:37563"/>
        <dbReference type="ChEBI" id="CHEBI:85986"/>
        <dbReference type="ChEBI" id="CHEBI:85987"/>
        <dbReference type="EC" id="2.7.7.38"/>
    </reaction>
</comment>
<comment type="pathway">
    <text evidence="1">Nucleotide-sugar biosynthesis; CMP-3-deoxy-D-manno-octulosonate biosynthesis; CMP-3-deoxy-D-manno-octulosonate from 3-deoxy-D-manno-octulosonate and CTP: step 1/1.</text>
</comment>
<comment type="pathway">
    <text evidence="1">Bacterial outer membrane biogenesis; lipopolysaccharide biosynthesis.</text>
</comment>
<comment type="subcellular location">
    <subcellularLocation>
        <location evidence="1">Cytoplasm</location>
    </subcellularLocation>
</comment>
<comment type="similarity">
    <text evidence="1">Belongs to the KdsB family.</text>
</comment>
<proteinExistence type="inferred from homology"/>